<comment type="function">
    <text evidence="1">NDH-1 shuttles electrons from NAD(P)H, via FMN and iron-sulfur (Fe-S) centers, to quinones in the respiratory chain. The immediate electron acceptor for the enzyme in this species is believed to be plastoquinone. Couples the redox reaction to proton translocation (for every two electrons transferred, four hydrogen ions are translocated across the cytoplasmic membrane), and thus conserves the redox energy in a proton gradient.</text>
</comment>
<comment type="catalytic activity">
    <reaction evidence="1">
        <text>a plastoquinone + NADH + (n+1) H(+)(in) = a plastoquinol + NAD(+) + n H(+)(out)</text>
        <dbReference type="Rhea" id="RHEA:42608"/>
        <dbReference type="Rhea" id="RHEA-COMP:9561"/>
        <dbReference type="Rhea" id="RHEA-COMP:9562"/>
        <dbReference type="ChEBI" id="CHEBI:15378"/>
        <dbReference type="ChEBI" id="CHEBI:17757"/>
        <dbReference type="ChEBI" id="CHEBI:57540"/>
        <dbReference type="ChEBI" id="CHEBI:57945"/>
        <dbReference type="ChEBI" id="CHEBI:62192"/>
    </reaction>
</comment>
<comment type="catalytic activity">
    <reaction evidence="1">
        <text>a plastoquinone + NADPH + (n+1) H(+)(in) = a plastoquinol + NADP(+) + n H(+)(out)</text>
        <dbReference type="Rhea" id="RHEA:42612"/>
        <dbReference type="Rhea" id="RHEA-COMP:9561"/>
        <dbReference type="Rhea" id="RHEA-COMP:9562"/>
        <dbReference type="ChEBI" id="CHEBI:15378"/>
        <dbReference type="ChEBI" id="CHEBI:17757"/>
        <dbReference type="ChEBI" id="CHEBI:57783"/>
        <dbReference type="ChEBI" id="CHEBI:58349"/>
        <dbReference type="ChEBI" id="CHEBI:62192"/>
    </reaction>
</comment>
<comment type="subcellular location">
    <subcellularLocation>
        <location evidence="1">Cellular thylakoid membrane</location>
        <topology evidence="1">Multi-pass membrane protein</topology>
    </subcellularLocation>
</comment>
<comment type="similarity">
    <text evidence="1">Belongs to the complex I subunit 4 family.</text>
</comment>
<sequence>MLTANFPWLSAIILLPLLASFLIPVIPDKEGKTVRWFALGVGLADFILMCYVFLQKYDLSNPNLQLVEKIDWVPQIGLSWAVSVDGISAPLVLLAGLVTTLSILAAWQVDRKPRLFYFLMLLLYAAQIGVFVAQDLLLFFLMWEIELIPVYLLVSIWGGQKRRYAATKFLLYTAAASIFILVAGLAMALYGGGAMTFDMAELGFKDYPLALELVLYAGLLIAFGVKLAIFPLHTWLPDAHGEASAPVSMILAGVLLKMGGYGLIRLNMGLLPDAHIYFAPILAILGVVNIIYGAFASFGQQNMKRRLAYSSVSHMGFVLLGIASFTDVGISGAMLQMLSHGLIAAVLFFLAGVTYDRTHTLALNEMGGIAQAMPKVFALFTAGAMASLALPGMSGFASEITVFIGVTSSDVYSQTFRVVTVFLASVGLILTPIYLLSMLRQVFYGDGSSCDITNILPNKSNEQAVCFGTSCVLPHESEYSDAKPREIFIAVSFLALIVAIGFYPQLATRIYDVKTVAVNSEVRQAYTEIAATRQNIYAETQPDVSAKVASIFQ</sequence>
<reference key="1">
    <citation type="journal article" date="2007" name="DNA Res.">
        <title>Complete genomic structure of the bloom-forming toxic cyanobacterium Microcystis aeruginosa NIES-843.</title>
        <authorList>
            <person name="Kaneko T."/>
            <person name="Nakajima N."/>
            <person name="Okamoto S."/>
            <person name="Suzuki I."/>
            <person name="Tanabe Y."/>
            <person name="Tamaoki M."/>
            <person name="Nakamura Y."/>
            <person name="Kasai F."/>
            <person name="Watanabe A."/>
            <person name="Kawashima K."/>
            <person name="Kishida Y."/>
            <person name="Ono A."/>
            <person name="Shimizu Y."/>
            <person name="Takahashi C."/>
            <person name="Minami C."/>
            <person name="Fujishiro T."/>
            <person name="Kohara M."/>
            <person name="Katoh M."/>
            <person name="Nakazaki N."/>
            <person name="Nakayama S."/>
            <person name="Yamada M."/>
            <person name="Tabata S."/>
            <person name="Watanabe M.M."/>
        </authorList>
    </citation>
    <scope>NUCLEOTIDE SEQUENCE [LARGE SCALE GENOMIC DNA]</scope>
    <source>
        <strain>NIES-843 / IAM M-247</strain>
    </source>
</reference>
<protein>
    <recommendedName>
        <fullName evidence="1">NAD(P)H-quinone oxidoreductase chain 4 2</fullName>
        <ecNumber evidence="1">7.1.1.-</ecNumber>
    </recommendedName>
    <alternativeName>
        <fullName evidence="1">NAD(P)H dehydrogenase I, chain 4 2</fullName>
    </alternativeName>
    <alternativeName>
        <fullName evidence="1">NDH-1, chain 4 2</fullName>
    </alternativeName>
</protein>
<name>NU4C2_MICAN</name>
<proteinExistence type="inferred from homology"/>
<evidence type="ECO:0000255" key="1">
    <source>
        <dbReference type="HAMAP-Rule" id="MF_00491"/>
    </source>
</evidence>
<organism>
    <name type="scientific">Microcystis aeruginosa (strain NIES-843 / IAM M-2473)</name>
    <dbReference type="NCBI Taxonomy" id="449447"/>
    <lineage>
        <taxon>Bacteria</taxon>
        <taxon>Bacillati</taxon>
        <taxon>Cyanobacteriota</taxon>
        <taxon>Cyanophyceae</taxon>
        <taxon>Oscillatoriophycideae</taxon>
        <taxon>Chroococcales</taxon>
        <taxon>Microcystaceae</taxon>
        <taxon>Microcystis</taxon>
    </lineage>
</organism>
<keyword id="KW-0472">Membrane</keyword>
<keyword id="KW-0520">NAD</keyword>
<keyword id="KW-0521">NADP</keyword>
<keyword id="KW-0618">Plastoquinone</keyword>
<keyword id="KW-0874">Quinone</keyword>
<keyword id="KW-0793">Thylakoid</keyword>
<keyword id="KW-1278">Translocase</keyword>
<keyword id="KW-0812">Transmembrane</keyword>
<keyword id="KW-1133">Transmembrane helix</keyword>
<feature type="chain" id="PRO_0000343233" description="NAD(P)H-quinone oxidoreductase chain 4 2">
    <location>
        <begin position="1"/>
        <end position="553"/>
    </location>
</feature>
<feature type="transmembrane region" description="Helical" evidence="1">
    <location>
        <begin position="6"/>
        <end position="26"/>
    </location>
</feature>
<feature type="transmembrane region" description="Helical" evidence="1">
    <location>
        <begin position="34"/>
        <end position="54"/>
    </location>
</feature>
<feature type="transmembrane region" description="Helical" evidence="1">
    <location>
        <begin position="87"/>
        <end position="107"/>
    </location>
</feature>
<feature type="transmembrane region" description="Helical" evidence="1">
    <location>
        <begin position="115"/>
        <end position="135"/>
    </location>
</feature>
<feature type="transmembrane region" description="Helical" evidence="1">
    <location>
        <begin position="136"/>
        <end position="156"/>
    </location>
</feature>
<feature type="transmembrane region" description="Helical" evidence="1">
    <location>
        <begin position="169"/>
        <end position="189"/>
    </location>
</feature>
<feature type="transmembrane region" description="Helical" evidence="1">
    <location>
        <begin position="210"/>
        <end position="230"/>
    </location>
</feature>
<feature type="transmembrane region" description="Helical" evidence="1">
    <location>
        <begin position="244"/>
        <end position="264"/>
    </location>
</feature>
<feature type="transmembrane region" description="Helical" evidence="1">
    <location>
        <begin position="276"/>
        <end position="296"/>
    </location>
</feature>
<feature type="transmembrane region" description="Helical" evidence="1">
    <location>
        <begin position="312"/>
        <end position="332"/>
    </location>
</feature>
<feature type="transmembrane region" description="Helical" evidence="1">
    <location>
        <begin position="333"/>
        <end position="353"/>
    </location>
</feature>
<feature type="transmembrane region" description="Helical" evidence="1">
    <location>
        <begin position="376"/>
        <end position="396"/>
    </location>
</feature>
<feature type="transmembrane region" description="Helical" evidence="1">
    <location>
        <begin position="418"/>
        <end position="438"/>
    </location>
</feature>
<feature type="transmembrane region" description="Helical" evidence="1">
    <location>
        <begin position="487"/>
        <end position="507"/>
    </location>
</feature>
<dbReference type="EC" id="7.1.1.-" evidence="1"/>
<dbReference type="EMBL" id="AP009552">
    <property type="protein sequence ID" value="BAG04043.1"/>
    <property type="molecule type" value="Genomic_DNA"/>
</dbReference>
<dbReference type="RefSeq" id="WP_012266897.1">
    <property type="nucleotide sequence ID" value="NC_010296.1"/>
</dbReference>
<dbReference type="SMR" id="B0JS85"/>
<dbReference type="STRING" id="449447.MAE_42210"/>
<dbReference type="PaxDb" id="449447-MAE_42210"/>
<dbReference type="EnsemblBacteria" id="BAG04043">
    <property type="protein sequence ID" value="BAG04043"/>
    <property type="gene ID" value="MAE_42210"/>
</dbReference>
<dbReference type="KEGG" id="mar:MAE_42210"/>
<dbReference type="PATRIC" id="fig|449447.4.peg.3823"/>
<dbReference type="eggNOG" id="COG1008">
    <property type="taxonomic scope" value="Bacteria"/>
</dbReference>
<dbReference type="HOGENOM" id="CLU_007100_4_4_3"/>
<dbReference type="BioCyc" id="MAER449447:MAE_RS18290-MONOMER"/>
<dbReference type="Proteomes" id="UP000001510">
    <property type="component" value="Chromosome"/>
</dbReference>
<dbReference type="GO" id="GO:0031676">
    <property type="term" value="C:plasma membrane-derived thylakoid membrane"/>
    <property type="evidence" value="ECO:0007669"/>
    <property type="project" value="UniProtKB-SubCell"/>
</dbReference>
<dbReference type="GO" id="GO:0008137">
    <property type="term" value="F:NADH dehydrogenase (ubiquinone) activity"/>
    <property type="evidence" value="ECO:0007669"/>
    <property type="project" value="InterPro"/>
</dbReference>
<dbReference type="GO" id="GO:0048039">
    <property type="term" value="F:ubiquinone binding"/>
    <property type="evidence" value="ECO:0007669"/>
    <property type="project" value="TreeGrafter"/>
</dbReference>
<dbReference type="GO" id="GO:0042773">
    <property type="term" value="P:ATP synthesis coupled electron transport"/>
    <property type="evidence" value="ECO:0007669"/>
    <property type="project" value="InterPro"/>
</dbReference>
<dbReference type="GO" id="GO:0015990">
    <property type="term" value="P:electron transport coupled proton transport"/>
    <property type="evidence" value="ECO:0007669"/>
    <property type="project" value="TreeGrafter"/>
</dbReference>
<dbReference type="HAMAP" id="MF_00491">
    <property type="entry name" value="NDH1_NuoM"/>
    <property type="match status" value="1"/>
</dbReference>
<dbReference type="InterPro" id="IPR022997">
    <property type="entry name" value="NADH_Q_OxRdtase_chain4"/>
</dbReference>
<dbReference type="InterPro" id="IPR010227">
    <property type="entry name" value="NADH_Q_OxRdtase_chainM/4"/>
</dbReference>
<dbReference type="InterPro" id="IPR003918">
    <property type="entry name" value="NADH_UbQ_OxRdtase"/>
</dbReference>
<dbReference type="InterPro" id="IPR001750">
    <property type="entry name" value="ND/Mrp_TM"/>
</dbReference>
<dbReference type="NCBIfam" id="TIGR01972">
    <property type="entry name" value="NDH_I_M"/>
    <property type="match status" value="1"/>
</dbReference>
<dbReference type="NCBIfam" id="NF009212">
    <property type="entry name" value="PRK12561.1"/>
    <property type="match status" value="1"/>
</dbReference>
<dbReference type="PANTHER" id="PTHR43507:SF21">
    <property type="entry name" value="NAD(P)H-QUINONE OXIDOREDUCTASE CHAIN 4, CHLOROPLASTIC"/>
    <property type="match status" value="1"/>
</dbReference>
<dbReference type="PANTHER" id="PTHR43507">
    <property type="entry name" value="NADH-UBIQUINONE OXIDOREDUCTASE CHAIN 4"/>
    <property type="match status" value="1"/>
</dbReference>
<dbReference type="Pfam" id="PF00361">
    <property type="entry name" value="Proton_antipo_M"/>
    <property type="match status" value="1"/>
</dbReference>
<dbReference type="PRINTS" id="PR01437">
    <property type="entry name" value="NUOXDRDTASE4"/>
</dbReference>
<accession>B0JS85</accession>
<gene>
    <name evidence="1" type="primary">ndhD2</name>
    <name type="ordered locus">MAE_42210</name>
</gene>